<keyword id="KW-0378">Hydrolase</keyword>
<keyword id="KW-0511">Multifunctional enzyme</keyword>
<keyword id="KW-0658">Purine biosynthesis</keyword>
<keyword id="KW-1185">Reference proteome</keyword>
<keyword id="KW-0808">Transferase</keyword>
<dbReference type="EC" id="2.1.2.3" evidence="1"/>
<dbReference type="EC" id="3.5.4.10" evidence="1"/>
<dbReference type="EMBL" id="BX571965">
    <property type="protein sequence ID" value="CAH36906.1"/>
    <property type="molecule type" value="Genomic_DNA"/>
</dbReference>
<dbReference type="RefSeq" id="WP_004527723.1">
    <property type="nucleotide sequence ID" value="NZ_CP009538.1"/>
</dbReference>
<dbReference type="RefSeq" id="YP_109490.1">
    <property type="nucleotide sequence ID" value="NC_006350.1"/>
</dbReference>
<dbReference type="SMR" id="Q63QX8"/>
<dbReference type="STRING" id="272560.BPSL2896"/>
<dbReference type="GeneID" id="93061491"/>
<dbReference type="KEGG" id="bps:BPSL2896"/>
<dbReference type="PATRIC" id="fig|272560.51.peg.2394"/>
<dbReference type="eggNOG" id="COG0138">
    <property type="taxonomic scope" value="Bacteria"/>
</dbReference>
<dbReference type="UniPathway" id="UPA00074">
    <property type="reaction ID" value="UER00133"/>
</dbReference>
<dbReference type="UniPathway" id="UPA00074">
    <property type="reaction ID" value="UER00135"/>
</dbReference>
<dbReference type="Proteomes" id="UP000000605">
    <property type="component" value="Chromosome 1"/>
</dbReference>
<dbReference type="GO" id="GO:0005829">
    <property type="term" value="C:cytosol"/>
    <property type="evidence" value="ECO:0007669"/>
    <property type="project" value="TreeGrafter"/>
</dbReference>
<dbReference type="GO" id="GO:0003937">
    <property type="term" value="F:IMP cyclohydrolase activity"/>
    <property type="evidence" value="ECO:0007669"/>
    <property type="project" value="UniProtKB-UniRule"/>
</dbReference>
<dbReference type="GO" id="GO:0004643">
    <property type="term" value="F:phosphoribosylaminoimidazolecarboxamide formyltransferase activity"/>
    <property type="evidence" value="ECO:0007669"/>
    <property type="project" value="UniProtKB-UniRule"/>
</dbReference>
<dbReference type="GO" id="GO:0006189">
    <property type="term" value="P:'de novo' IMP biosynthetic process"/>
    <property type="evidence" value="ECO:0007669"/>
    <property type="project" value="UniProtKB-UniRule"/>
</dbReference>
<dbReference type="CDD" id="cd01421">
    <property type="entry name" value="IMPCH"/>
    <property type="match status" value="1"/>
</dbReference>
<dbReference type="FunFam" id="3.40.140.20:FF:000001">
    <property type="entry name" value="Bifunctional purine biosynthesis protein PurH"/>
    <property type="match status" value="1"/>
</dbReference>
<dbReference type="FunFam" id="3.40.140.20:FF:000002">
    <property type="entry name" value="Bifunctional purine biosynthesis protein PurH"/>
    <property type="match status" value="1"/>
</dbReference>
<dbReference type="FunFam" id="3.40.50.1380:FF:000001">
    <property type="entry name" value="Bifunctional purine biosynthesis protein PurH"/>
    <property type="match status" value="1"/>
</dbReference>
<dbReference type="Gene3D" id="3.40.140.20">
    <property type="match status" value="2"/>
</dbReference>
<dbReference type="Gene3D" id="3.40.50.1380">
    <property type="entry name" value="Methylglyoxal synthase-like domain"/>
    <property type="match status" value="1"/>
</dbReference>
<dbReference type="HAMAP" id="MF_00139">
    <property type="entry name" value="PurH"/>
    <property type="match status" value="1"/>
</dbReference>
<dbReference type="InterPro" id="IPR024051">
    <property type="entry name" value="AICAR_Tfase_dup_dom_sf"/>
</dbReference>
<dbReference type="InterPro" id="IPR016193">
    <property type="entry name" value="Cytidine_deaminase-like"/>
</dbReference>
<dbReference type="InterPro" id="IPR011607">
    <property type="entry name" value="MGS-like_dom"/>
</dbReference>
<dbReference type="InterPro" id="IPR036914">
    <property type="entry name" value="MGS-like_dom_sf"/>
</dbReference>
<dbReference type="InterPro" id="IPR002695">
    <property type="entry name" value="PurH-like"/>
</dbReference>
<dbReference type="NCBIfam" id="NF002049">
    <property type="entry name" value="PRK00881.1"/>
    <property type="match status" value="1"/>
</dbReference>
<dbReference type="NCBIfam" id="TIGR00355">
    <property type="entry name" value="purH"/>
    <property type="match status" value="1"/>
</dbReference>
<dbReference type="PANTHER" id="PTHR11692:SF0">
    <property type="entry name" value="BIFUNCTIONAL PURINE BIOSYNTHESIS PROTEIN ATIC"/>
    <property type="match status" value="1"/>
</dbReference>
<dbReference type="PANTHER" id="PTHR11692">
    <property type="entry name" value="BIFUNCTIONAL PURINE BIOSYNTHESIS PROTEIN PURH"/>
    <property type="match status" value="1"/>
</dbReference>
<dbReference type="Pfam" id="PF01808">
    <property type="entry name" value="AICARFT_IMPCHas"/>
    <property type="match status" value="1"/>
</dbReference>
<dbReference type="Pfam" id="PF02142">
    <property type="entry name" value="MGS"/>
    <property type="match status" value="1"/>
</dbReference>
<dbReference type="PIRSF" id="PIRSF000414">
    <property type="entry name" value="AICARFT_IMPCHas"/>
    <property type="match status" value="1"/>
</dbReference>
<dbReference type="SMART" id="SM00798">
    <property type="entry name" value="AICARFT_IMPCHas"/>
    <property type="match status" value="1"/>
</dbReference>
<dbReference type="SMART" id="SM00851">
    <property type="entry name" value="MGS"/>
    <property type="match status" value="1"/>
</dbReference>
<dbReference type="SUPFAM" id="SSF53927">
    <property type="entry name" value="Cytidine deaminase-like"/>
    <property type="match status" value="1"/>
</dbReference>
<dbReference type="SUPFAM" id="SSF52335">
    <property type="entry name" value="Methylglyoxal synthase-like"/>
    <property type="match status" value="1"/>
</dbReference>
<dbReference type="PROSITE" id="PS51855">
    <property type="entry name" value="MGS"/>
    <property type="match status" value="1"/>
</dbReference>
<accession>Q63QX8</accession>
<sequence length="521" mass="55486">MIKQALISVSDKTGIVDFAKALSALGVKLLSTGGTAKLLADAGLPVTEVADYTGFPEMLDGRVKTLHPKVHGGILARRDLPEHMQALEAHGIPTIDLLVVNLYPFVQTIAKDDCTLADAIENIDIGGPTMLRSAAKNHRDVTVVVDPADYAVVLDEMKANGNTLGYKTNFRLATKVFAHTAQYDGAITNYLTSLGDDLQHGSRSAYPATLNLAFDKVQDLRYGENPHQSAAFYRDVATPAGALANYRQLQGKELSYNNIADSDAAWECVKTFDAPACVIIKHANPCGVAVGADAGEAYAKAFQTDPTSAFGGIIAFNREVDEAAAQAVAKQFVEVLIAPSFSDAAKQVFVAKQNVRLLEIALGEGHNAFDLKRVGGGLLVQSLDSKNVQPRELRVVTKRHPTPKEMDDLLFAWRVAKYVKSNAIVFCGNGMTLGVGAGQMSRVDSARIASIKAQNAGLTLAGSAVASDAFFPFRDGLDVVVAAGATCVIQPGGSVRDDEVIAAADEHNIAMVVTGVRHFRH</sequence>
<organism>
    <name type="scientific">Burkholderia pseudomallei (strain K96243)</name>
    <dbReference type="NCBI Taxonomy" id="272560"/>
    <lineage>
        <taxon>Bacteria</taxon>
        <taxon>Pseudomonadati</taxon>
        <taxon>Pseudomonadota</taxon>
        <taxon>Betaproteobacteria</taxon>
        <taxon>Burkholderiales</taxon>
        <taxon>Burkholderiaceae</taxon>
        <taxon>Burkholderia</taxon>
        <taxon>pseudomallei group</taxon>
    </lineage>
</organism>
<reference key="1">
    <citation type="journal article" date="2004" name="Proc. Natl. Acad. Sci. U.S.A.">
        <title>Genomic plasticity of the causative agent of melioidosis, Burkholderia pseudomallei.</title>
        <authorList>
            <person name="Holden M.T.G."/>
            <person name="Titball R.W."/>
            <person name="Peacock S.J."/>
            <person name="Cerdeno-Tarraga A.-M."/>
            <person name="Atkins T."/>
            <person name="Crossman L.C."/>
            <person name="Pitt T."/>
            <person name="Churcher C."/>
            <person name="Mungall K.L."/>
            <person name="Bentley S.D."/>
            <person name="Sebaihia M."/>
            <person name="Thomson N.R."/>
            <person name="Bason N."/>
            <person name="Beacham I.R."/>
            <person name="Brooks K."/>
            <person name="Brown K.A."/>
            <person name="Brown N.F."/>
            <person name="Challis G.L."/>
            <person name="Cherevach I."/>
            <person name="Chillingworth T."/>
            <person name="Cronin A."/>
            <person name="Crossett B."/>
            <person name="Davis P."/>
            <person name="DeShazer D."/>
            <person name="Feltwell T."/>
            <person name="Fraser A."/>
            <person name="Hance Z."/>
            <person name="Hauser H."/>
            <person name="Holroyd S."/>
            <person name="Jagels K."/>
            <person name="Keith K.E."/>
            <person name="Maddison M."/>
            <person name="Moule S."/>
            <person name="Price C."/>
            <person name="Quail M.A."/>
            <person name="Rabbinowitsch E."/>
            <person name="Rutherford K."/>
            <person name="Sanders M."/>
            <person name="Simmonds M."/>
            <person name="Songsivilai S."/>
            <person name="Stevens K."/>
            <person name="Tumapa S."/>
            <person name="Vesaratchavest M."/>
            <person name="Whitehead S."/>
            <person name="Yeats C."/>
            <person name="Barrell B.G."/>
            <person name="Oyston P.C.F."/>
            <person name="Parkhill J."/>
        </authorList>
    </citation>
    <scope>NUCLEOTIDE SEQUENCE [LARGE SCALE GENOMIC DNA]</scope>
    <source>
        <strain>K96243</strain>
    </source>
</reference>
<evidence type="ECO:0000255" key="1">
    <source>
        <dbReference type="HAMAP-Rule" id="MF_00139"/>
    </source>
</evidence>
<evidence type="ECO:0000255" key="2">
    <source>
        <dbReference type="PROSITE-ProRule" id="PRU01202"/>
    </source>
</evidence>
<proteinExistence type="inferred from homology"/>
<feature type="chain" id="PRO_1000018861" description="Bifunctional purine biosynthesis protein PurH">
    <location>
        <begin position="1"/>
        <end position="521"/>
    </location>
</feature>
<feature type="domain" description="MGS-like" evidence="2">
    <location>
        <begin position="1"/>
        <end position="145"/>
    </location>
</feature>
<protein>
    <recommendedName>
        <fullName evidence="1">Bifunctional purine biosynthesis protein PurH</fullName>
    </recommendedName>
    <domain>
        <recommendedName>
            <fullName evidence="1">Phosphoribosylaminoimidazolecarboxamide formyltransferase</fullName>
            <ecNumber evidence="1">2.1.2.3</ecNumber>
        </recommendedName>
        <alternativeName>
            <fullName evidence="1">AICAR transformylase</fullName>
        </alternativeName>
    </domain>
    <domain>
        <recommendedName>
            <fullName evidence="1">IMP cyclohydrolase</fullName>
            <ecNumber evidence="1">3.5.4.10</ecNumber>
        </recommendedName>
        <alternativeName>
            <fullName evidence="1">ATIC</fullName>
        </alternativeName>
        <alternativeName>
            <fullName evidence="1">IMP synthase</fullName>
        </alternativeName>
        <alternativeName>
            <fullName evidence="1">Inosinicase</fullName>
        </alternativeName>
    </domain>
</protein>
<gene>
    <name evidence="1" type="primary">purH</name>
    <name type="ordered locus">BPSL2896</name>
</gene>
<comment type="catalytic activity">
    <reaction evidence="1">
        <text>(6R)-10-formyltetrahydrofolate + 5-amino-1-(5-phospho-beta-D-ribosyl)imidazole-4-carboxamide = 5-formamido-1-(5-phospho-D-ribosyl)imidazole-4-carboxamide + (6S)-5,6,7,8-tetrahydrofolate</text>
        <dbReference type="Rhea" id="RHEA:22192"/>
        <dbReference type="ChEBI" id="CHEBI:57453"/>
        <dbReference type="ChEBI" id="CHEBI:58467"/>
        <dbReference type="ChEBI" id="CHEBI:58475"/>
        <dbReference type="ChEBI" id="CHEBI:195366"/>
        <dbReference type="EC" id="2.1.2.3"/>
    </reaction>
</comment>
<comment type="catalytic activity">
    <reaction evidence="1">
        <text>IMP + H2O = 5-formamido-1-(5-phospho-D-ribosyl)imidazole-4-carboxamide</text>
        <dbReference type="Rhea" id="RHEA:18445"/>
        <dbReference type="ChEBI" id="CHEBI:15377"/>
        <dbReference type="ChEBI" id="CHEBI:58053"/>
        <dbReference type="ChEBI" id="CHEBI:58467"/>
        <dbReference type="EC" id="3.5.4.10"/>
    </reaction>
</comment>
<comment type="pathway">
    <text evidence="1">Purine metabolism; IMP biosynthesis via de novo pathway; 5-formamido-1-(5-phospho-D-ribosyl)imidazole-4-carboxamide from 5-amino-1-(5-phospho-D-ribosyl)imidazole-4-carboxamide (10-formyl THF route): step 1/1.</text>
</comment>
<comment type="pathway">
    <text evidence="1">Purine metabolism; IMP biosynthesis via de novo pathway; IMP from 5-formamido-1-(5-phospho-D-ribosyl)imidazole-4-carboxamide: step 1/1.</text>
</comment>
<comment type="domain">
    <text evidence="1">The IMP cyclohydrolase activity resides in the N-terminal region.</text>
</comment>
<comment type="similarity">
    <text evidence="1">Belongs to the PurH family.</text>
</comment>
<name>PUR9_BURPS</name>